<reference key="1">
    <citation type="journal article" date="1995" name="Plant Physiol.">
        <title>Nucleotide sequence of an operon in Nostoc sp. strain ATCC 29133 encoding four genes of the oxidative pentose phosphate cycle.</title>
        <authorList>
            <person name="Summers M.L."/>
            <person name="Meeks J.C."/>
            <person name="Chu S."/>
            <person name="Wolf R.E. Jr."/>
        </authorList>
    </citation>
    <scope>NUCLEOTIDE SEQUENCE [GENOMIC DNA]</scope>
</reference>
<reference key="2">
    <citation type="journal article" date="2013" name="Plant Physiol.">
        <title>A Nostoc punctiforme Sugar Transporter Necessary to Establish a Cyanobacterium-Plant Symbiosis.</title>
        <authorList>
            <person name="Ekman M."/>
            <person name="Picossi S."/>
            <person name="Campbell E.L."/>
            <person name="Meeks J.C."/>
            <person name="Flores E."/>
        </authorList>
    </citation>
    <scope>NUCLEOTIDE SEQUENCE [LARGE SCALE GENOMIC DNA]</scope>
    <source>
        <strain>ATCC 29133 / PCC 73102</strain>
    </source>
</reference>
<gene>
    <name type="primary">tal2</name>
    <name type="ordered locus">Npun_F4024</name>
</gene>
<sequence length="381" mass="42303">MSTNHLLEIKQYGQSIWMDNLTRDIIQSGELKDMVENQGISGITSNPAIFEKAIAGNAIYDADIEAGVRAGLPIYKIYESLVFADIRNACDILRPVYEASNRLDGYVSIEVPPTIAHDTEATISEARRYFQEIGRENLMIKIPGTEPGLPAVEQVIAEGMNVNITLLFSVESYVNTAWAYVRGLEKRLAEGKDISRIASVASFFLSRIDSNIDAKIDAKLKKGVDDIAVEAKLKAVKGKVAIANAKLAYQEYKKIIRSERWQELVAKGATVQRLLWASTSTKDPNYNDVMYIEELVGPDTVNTVPPATIKACADHCNVSDRLETDVNNAYTLIENLKDPDINIDLDTVMDELLVEGIDKFIQPFQSLMNSLEDKIKVLSPV</sequence>
<protein>
    <recommendedName>
        <fullName>Transaldolase 2</fullName>
        <ecNumber>2.2.1.2</ecNumber>
    </recommendedName>
</protein>
<dbReference type="EC" id="2.2.1.2"/>
<dbReference type="EMBL" id="L32796">
    <property type="protein sequence ID" value="AAA50769.1"/>
    <property type="molecule type" value="Genomic_DNA"/>
</dbReference>
<dbReference type="EMBL" id="CP001037">
    <property type="protein sequence ID" value="ACC82403.1"/>
    <property type="molecule type" value="Genomic_DNA"/>
</dbReference>
<dbReference type="RefSeq" id="WP_012410370.1">
    <property type="nucleotide sequence ID" value="NC_010628.1"/>
</dbReference>
<dbReference type="SMR" id="P48983"/>
<dbReference type="STRING" id="63737.Npun_F4024"/>
<dbReference type="EnsemblBacteria" id="ACC82403">
    <property type="protein sequence ID" value="ACC82403"/>
    <property type="gene ID" value="Npun_F4024"/>
</dbReference>
<dbReference type="KEGG" id="npu:Npun_F4024"/>
<dbReference type="eggNOG" id="COG0176">
    <property type="taxonomic scope" value="Bacteria"/>
</dbReference>
<dbReference type="HOGENOM" id="CLU_050771_1_0_3"/>
<dbReference type="OrthoDB" id="140919at2"/>
<dbReference type="PhylomeDB" id="P48983"/>
<dbReference type="UniPathway" id="UPA00115">
    <property type="reaction ID" value="UER00414"/>
</dbReference>
<dbReference type="Proteomes" id="UP000001191">
    <property type="component" value="Chromosome"/>
</dbReference>
<dbReference type="GO" id="GO:0005737">
    <property type="term" value="C:cytoplasm"/>
    <property type="evidence" value="ECO:0007669"/>
    <property type="project" value="UniProtKB-SubCell"/>
</dbReference>
<dbReference type="GO" id="GO:0004801">
    <property type="term" value="F:transaldolase activity"/>
    <property type="evidence" value="ECO:0007669"/>
    <property type="project" value="UniProtKB-UniRule"/>
</dbReference>
<dbReference type="GO" id="GO:0005975">
    <property type="term" value="P:carbohydrate metabolic process"/>
    <property type="evidence" value="ECO:0007669"/>
    <property type="project" value="InterPro"/>
</dbReference>
<dbReference type="GO" id="GO:0006098">
    <property type="term" value="P:pentose-phosphate shunt"/>
    <property type="evidence" value="ECO:0007669"/>
    <property type="project" value="UniProtKB-UniRule"/>
</dbReference>
<dbReference type="CDD" id="cd00955">
    <property type="entry name" value="Transaldolase_like"/>
    <property type="match status" value="1"/>
</dbReference>
<dbReference type="Gene3D" id="3.20.20.70">
    <property type="entry name" value="Aldolase class I"/>
    <property type="match status" value="1"/>
</dbReference>
<dbReference type="HAMAP" id="MF_00493">
    <property type="entry name" value="Transaldolase_2"/>
    <property type="match status" value="1"/>
</dbReference>
<dbReference type="InterPro" id="IPR013785">
    <property type="entry name" value="Aldolase_TIM"/>
</dbReference>
<dbReference type="InterPro" id="IPR001585">
    <property type="entry name" value="TAL/FSA"/>
</dbReference>
<dbReference type="InterPro" id="IPR004732">
    <property type="entry name" value="Transaldolase_2"/>
</dbReference>
<dbReference type="InterPro" id="IPR018225">
    <property type="entry name" value="Transaldolase_AS"/>
</dbReference>
<dbReference type="NCBIfam" id="NF002881">
    <property type="entry name" value="PRK03343.1"/>
    <property type="match status" value="1"/>
</dbReference>
<dbReference type="NCBIfam" id="TIGR00876">
    <property type="entry name" value="tal_mycobact"/>
    <property type="match status" value="1"/>
</dbReference>
<dbReference type="PANTHER" id="PTHR10683">
    <property type="entry name" value="TRANSALDOLASE"/>
    <property type="match status" value="1"/>
</dbReference>
<dbReference type="PANTHER" id="PTHR10683:SF31">
    <property type="entry name" value="TRANSALDOLASE"/>
    <property type="match status" value="1"/>
</dbReference>
<dbReference type="Pfam" id="PF00923">
    <property type="entry name" value="TAL_FSA"/>
    <property type="match status" value="1"/>
</dbReference>
<dbReference type="PIRSF" id="PIRSF036915">
    <property type="entry name" value="Trnald_Bac_Plnt"/>
    <property type="match status" value="1"/>
</dbReference>
<dbReference type="SUPFAM" id="SSF51569">
    <property type="entry name" value="Aldolase"/>
    <property type="match status" value="1"/>
</dbReference>
<dbReference type="PROSITE" id="PS01054">
    <property type="entry name" value="TRANSALDOLASE_1"/>
    <property type="match status" value="1"/>
</dbReference>
<dbReference type="PROSITE" id="PS00958">
    <property type="entry name" value="TRANSALDOLASE_2"/>
    <property type="match status" value="1"/>
</dbReference>
<keyword id="KW-0963">Cytoplasm</keyword>
<keyword id="KW-0570">Pentose shunt</keyword>
<keyword id="KW-1185">Reference proteome</keyword>
<keyword id="KW-0704">Schiff base</keyword>
<keyword id="KW-0808">Transferase</keyword>
<proteinExistence type="inferred from homology"/>
<feature type="chain" id="PRO_0000173629" description="Transaldolase 2">
    <location>
        <begin position="1"/>
        <end position="381"/>
    </location>
</feature>
<feature type="active site" description="Schiff-base intermediate with substrate" evidence="1">
    <location>
        <position position="141"/>
    </location>
</feature>
<accession>P48983</accession>
<accession>B2J6J8</accession>
<evidence type="ECO:0000250" key="1"/>
<evidence type="ECO:0000305" key="2"/>
<organism>
    <name type="scientific">Nostoc punctiforme (strain ATCC 29133 / PCC 73102)</name>
    <dbReference type="NCBI Taxonomy" id="63737"/>
    <lineage>
        <taxon>Bacteria</taxon>
        <taxon>Bacillati</taxon>
        <taxon>Cyanobacteriota</taxon>
        <taxon>Cyanophyceae</taxon>
        <taxon>Nostocales</taxon>
        <taxon>Nostocaceae</taxon>
        <taxon>Nostoc</taxon>
    </lineage>
</organism>
<name>TAL2_NOSP7</name>
<comment type="function">
    <text>Transaldolase is important for the balance of metabolites in the pentose-phosphate pathway.</text>
</comment>
<comment type="catalytic activity">
    <reaction>
        <text>D-sedoheptulose 7-phosphate + D-glyceraldehyde 3-phosphate = D-erythrose 4-phosphate + beta-D-fructose 6-phosphate</text>
        <dbReference type="Rhea" id="RHEA:17053"/>
        <dbReference type="ChEBI" id="CHEBI:16897"/>
        <dbReference type="ChEBI" id="CHEBI:57483"/>
        <dbReference type="ChEBI" id="CHEBI:57634"/>
        <dbReference type="ChEBI" id="CHEBI:59776"/>
        <dbReference type="EC" id="2.2.1.2"/>
    </reaction>
</comment>
<comment type="pathway">
    <text>Carbohydrate degradation; pentose phosphate pathway; D-glyceraldehyde 3-phosphate and beta-D-fructose 6-phosphate from D-ribose 5-phosphate and D-xylulose 5-phosphate (non-oxidative stage): step 2/3.</text>
</comment>
<comment type="subcellular location">
    <subcellularLocation>
        <location evidence="1">Cytoplasm</location>
    </subcellularLocation>
</comment>
<comment type="similarity">
    <text evidence="2">Belongs to the transaldolase family. Type 2 subfamily.</text>
</comment>